<name>SPEE_SALTY</name>
<feature type="chain" id="PRO_0000156504" description="Polyamine aminopropyltransferase">
    <location>
        <begin position="1"/>
        <end position="286"/>
    </location>
</feature>
<feature type="domain" description="PABS" evidence="1">
    <location>
        <begin position="5"/>
        <end position="238"/>
    </location>
</feature>
<feature type="active site" description="Proton acceptor" evidence="1">
    <location>
        <position position="158"/>
    </location>
</feature>
<feature type="binding site" evidence="1">
    <location>
        <position position="33"/>
    </location>
    <ligand>
        <name>S-methyl-5'-thioadenosine</name>
        <dbReference type="ChEBI" id="CHEBI:17509"/>
    </ligand>
</feature>
<feature type="binding site" evidence="1">
    <location>
        <position position="64"/>
    </location>
    <ligand>
        <name>spermidine</name>
        <dbReference type="ChEBI" id="CHEBI:57834"/>
    </ligand>
</feature>
<feature type="binding site" evidence="1">
    <location>
        <position position="88"/>
    </location>
    <ligand>
        <name>spermidine</name>
        <dbReference type="ChEBI" id="CHEBI:57834"/>
    </ligand>
</feature>
<feature type="binding site" evidence="1">
    <location>
        <position position="108"/>
    </location>
    <ligand>
        <name>S-methyl-5'-thioadenosine</name>
        <dbReference type="ChEBI" id="CHEBI:17509"/>
    </ligand>
</feature>
<feature type="binding site" evidence="1">
    <location>
        <begin position="140"/>
        <end position="141"/>
    </location>
    <ligand>
        <name>S-methyl-5'-thioadenosine</name>
        <dbReference type="ChEBI" id="CHEBI:17509"/>
    </ligand>
</feature>
<feature type="binding site" evidence="1">
    <location>
        <begin position="158"/>
        <end position="161"/>
    </location>
    <ligand>
        <name>spermidine</name>
        <dbReference type="ChEBI" id="CHEBI:57834"/>
    </ligand>
</feature>
<feature type="binding site" evidence="1">
    <location>
        <position position="165"/>
    </location>
    <ligand>
        <name>S-methyl-5'-thioadenosine</name>
        <dbReference type="ChEBI" id="CHEBI:17509"/>
    </ligand>
</feature>
<gene>
    <name evidence="1" type="primary">speE</name>
    <name type="ordered locus">STM0166</name>
</gene>
<dbReference type="EC" id="2.5.1.16" evidence="1"/>
<dbReference type="EMBL" id="AE006468">
    <property type="protein sequence ID" value="AAL19130.1"/>
    <property type="molecule type" value="Genomic_DNA"/>
</dbReference>
<dbReference type="RefSeq" id="NP_459171.1">
    <property type="nucleotide sequence ID" value="NC_003197.2"/>
</dbReference>
<dbReference type="RefSeq" id="WP_000829968.1">
    <property type="nucleotide sequence ID" value="NC_003197.2"/>
</dbReference>
<dbReference type="SMR" id="Q8ZRS3"/>
<dbReference type="STRING" id="99287.STM0166"/>
<dbReference type="PaxDb" id="99287-STM0166"/>
<dbReference type="GeneID" id="1251684"/>
<dbReference type="KEGG" id="stm:STM0166"/>
<dbReference type="PATRIC" id="fig|99287.12.peg.176"/>
<dbReference type="HOGENOM" id="CLU_048199_0_0_6"/>
<dbReference type="OMA" id="FLYHEMM"/>
<dbReference type="PhylomeDB" id="Q8ZRS3"/>
<dbReference type="BioCyc" id="SENT99287:STM0166-MONOMER"/>
<dbReference type="UniPathway" id="UPA00248">
    <property type="reaction ID" value="UER00314"/>
</dbReference>
<dbReference type="Proteomes" id="UP000001014">
    <property type="component" value="Chromosome"/>
</dbReference>
<dbReference type="GO" id="GO:0005829">
    <property type="term" value="C:cytosol"/>
    <property type="evidence" value="ECO:0000318"/>
    <property type="project" value="GO_Central"/>
</dbReference>
<dbReference type="GO" id="GO:0004766">
    <property type="term" value="F:spermidine synthase activity"/>
    <property type="evidence" value="ECO:0000318"/>
    <property type="project" value="GO_Central"/>
</dbReference>
<dbReference type="GO" id="GO:0008295">
    <property type="term" value="P:spermidine biosynthetic process"/>
    <property type="evidence" value="ECO:0000318"/>
    <property type="project" value="GO_Central"/>
</dbReference>
<dbReference type="CDD" id="cd02440">
    <property type="entry name" value="AdoMet_MTases"/>
    <property type="match status" value="1"/>
</dbReference>
<dbReference type="FunFam" id="2.30.140.10:FF:000002">
    <property type="entry name" value="Polyamine aminopropyltransferase"/>
    <property type="match status" value="1"/>
</dbReference>
<dbReference type="FunFam" id="3.40.50.150:FF:000026">
    <property type="entry name" value="Polyamine aminopropyltransferase"/>
    <property type="match status" value="1"/>
</dbReference>
<dbReference type="Gene3D" id="2.30.140.10">
    <property type="entry name" value="Spermidine synthase, tetramerisation domain"/>
    <property type="match status" value="1"/>
</dbReference>
<dbReference type="Gene3D" id="3.40.50.150">
    <property type="entry name" value="Vaccinia Virus protein VP39"/>
    <property type="match status" value="1"/>
</dbReference>
<dbReference type="HAMAP" id="MF_00198">
    <property type="entry name" value="Spermidine_synth"/>
    <property type="match status" value="1"/>
</dbReference>
<dbReference type="InterPro" id="IPR030374">
    <property type="entry name" value="PABS"/>
</dbReference>
<dbReference type="InterPro" id="IPR030373">
    <property type="entry name" value="PABS_CS"/>
</dbReference>
<dbReference type="InterPro" id="IPR029063">
    <property type="entry name" value="SAM-dependent_MTases_sf"/>
</dbReference>
<dbReference type="InterPro" id="IPR001045">
    <property type="entry name" value="Spermi_synthase"/>
</dbReference>
<dbReference type="InterPro" id="IPR035246">
    <property type="entry name" value="Spermidine_synt_N"/>
</dbReference>
<dbReference type="InterPro" id="IPR037163">
    <property type="entry name" value="Spermidine_synt_N_sf"/>
</dbReference>
<dbReference type="NCBIfam" id="NF037959">
    <property type="entry name" value="MFS_SpdSyn"/>
    <property type="match status" value="1"/>
</dbReference>
<dbReference type="NCBIfam" id="NF002010">
    <property type="entry name" value="PRK00811.1"/>
    <property type="match status" value="1"/>
</dbReference>
<dbReference type="NCBIfam" id="TIGR00417">
    <property type="entry name" value="speE"/>
    <property type="match status" value="1"/>
</dbReference>
<dbReference type="PANTHER" id="PTHR11558:SF11">
    <property type="entry name" value="SPERMIDINE SYNTHASE"/>
    <property type="match status" value="1"/>
</dbReference>
<dbReference type="PANTHER" id="PTHR11558">
    <property type="entry name" value="SPERMIDINE/SPERMINE SYNTHASE"/>
    <property type="match status" value="1"/>
</dbReference>
<dbReference type="Pfam" id="PF17284">
    <property type="entry name" value="Spermine_synt_N"/>
    <property type="match status" value="1"/>
</dbReference>
<dbReference type="Pfam" id="PF01564">
    <property type="entry name" value="Spermine_synth"/>
    <property type="match status" value="1"/>
</dbReference>
<dbReference type="SUPFAM" id="SSF53335">
    <property type="entry name" value="S-adenosyl-L-methionine-dependent methyltransferases"/>
    <property type="match status" value="1"/>
</dbReference>
<dbReference type="PROSITE" id="PS01330">
    <property type="entry name" value="PABS_1"/>
    <property type="match status" value="1"/>
</dbReference>
<dbReference type="PROSITE" id="PS51006">
    <property type="entry name" value="PABS_2"/>
    <property type="match status" value="1"/>
</dbReference>
<comment type="function">
    <text evidence="1">Catalyzes the irreversible transfer of a propylamine group from the amino donor S-adenosylmethioninamine (decarboxy-AdoMet) to putrescine (1,4-diaminobutane) to yield spermidine.</text>
</comment>
<comment type="catalytic activity">
    <reaction evidence="1">
        <text>S-adenosyl 3-(methylsulfanyl)propylamine + putrescine = S-methyl-5'-thioadenosine + spermidine + H(+)</text>
        <dbReference type="Rhea" id="RHEA:12721"/>
        <dbReference type="ChEBI" id="CHEBI:15378"/>
        <dbReference type="ChEBI" id="CHEBI:17509"/>
        <dbReference type="ChEBI" id="CHEBI:57443"/>
        <dbReference type="ChEBI" id="CHEBI:57834"/>
        <dbReference type="ChEBI" id="CHEBI:326268"/>
        <dbReference type="EC" id="2.5.1.16"/>
    </reaction>
</comment>
<comment type="pathway">
    <text evidence="1">Amine and polyamine biosynthesis; spermidine biosynthesis; spermidine from putrescine: step 1/1.</text>
</comment>
<comment type="subunit">
    <text evidence="1">Homodimer or homotetramer.</text>
</comment>
<comment type="subcellular location">
    <subcellularLocation>
        <location evidence="1">Cytoplasm</location>
    </subcellularLocation>
</comment>
<comment type="similarity">
    <text evidence="1">Belongs to the spermidine/spermine synthase family.</text>
</comment>
<organism>
    <name type="scientific">Salmonella typhimurium (strain LT2 / SGSC1412 / ATCC 700720)</name>
    <dbReference type="NCBI Taxonomy" id="99287"/>
    <lineage>
        <taxon>Bacteria</taxon>
        <taxon>Pseudomonadati</taxon>
        <taxon>Pseudomonadota</taxon>
        <taxon>Gammaproteobacteria</taxon>
        <taxon>Enterobacterales</taxon>
        <taxon>Enterobacteriaceae</taxon>
        <taxon>Salmonella</taxon>
    </lineage>
</organism>
<protein>
    <recommendedName>
        <fullName evidence="1">Polyamine aminopropyltransferase</fullName>
    </recommendedName>
    <alternativeName>
        <fullName evidence="1">Putrescine aminopropyltransferase</fullName>
        <shortName evidence="1">PAPT</shortName>
    </alternativeName>
    <alternativeName>
        <fullName evidence="1">Spermidine synthase</fullName>
        <shortName evidence="1">SPDS</shortName>
        <shortName evidence="1">SPDSY</shortName>
        <ecNumber evidence="1">2.5.1.16</ecNumber>
    </alternativeName>
</protein>
<reference key="1">
    <citation type="journal article" date="2001" name="Nature">
        <title>Complete genome sequence of Salmonella enterica serovar Typhimurium LT2.</title>
        <authorList>
            <person name="McClelland M."/>
            <person name="Sanderson K.E."/>
            <person name="Spieth J."/>
            <person name="Clifton S.W."/>
            <person name="Latreille P."/>
            <person name="Courtney L."/>
            <person name="Porwollik S."/>
            <person name="Ali J."/>
            <person name="Dante M."/>
            <person name="Du F."/>
            <person name="Hou S."/>
            <person name="Layman D."/>
            <person name="Leonard S."/>
            <person name="Nguyen C."/>
            <person name="Scott K."/>
            <person name="Holmes A."/>
            <person name="Grewal N."/>
            <person name="Mulvaney E."/>
            <person name="Ryan E."/>
            <person name="Sun H."/>
            <person name="Florea L."/>
            <person name="Miller W."/>
            <person name="Stoneking T."/>
            <person name="Nhan M."/>
            <person name="Waterston R."/>
            <person name="Wilson R.K."/>
        </authorList>
    </citation>
    <scope>NUCLEOTIDE SEQUENCE [LARGE SCALE GENOMIC DNA]</scope>
    <source>
        <strain>LT2 / SGSC1412 / ATCC 700720</strain>
    </source>
</reference>
<sequence length="286" mass="32095">MAENTMWHETLHDQFGQYFAVDNVLYHEKTDHQDLIIFENAAFGRVMALDGVVQTTERDEFIYHEMMTHVPLLAHGHAKHVLIIGGGDGAMLREVTRHKNVETITMVEIDAGVVSFCRQYLPNHNAGSYDDPRFTLVIDDGVNFVNQTHQTFDVIISDCTDPIGPGESLFTSAFYEGCKRCLNPGGIFVAQNGVCFLQQDEALDSHRKLSHYFSDVGFYQAAIPTYYGGIMTFAWATDNDALRHLSSEIIQARFHAAGLKCRYYNPAIHAAAFALPQYLHDALSAQ</sequence>
<evidence type="ECO:0000255" key="1">
    <source>
        <dbReference type="HAMAP-Rule" id="MF_00198"/>
    </source>
</evidence>
<proteinExistence type="inferred from homology"/>
<keyword id="KW-0963">Cytoplasm</keyword>
<keyword id="KW-0620">Polyamine biosynthesis</keyword>
<keyword id="KW-1185">Reference proteome</keyword>
<keyword id="KW-0745">Spermidine biosynthesis</keyword>
<keyword id="KW-0808">Transferase</keyword>
<accession>Q8ZRS3</accession>